<proteinExistence type="inferred from homology"/>
<feature type="chain" id="PRO_0000265572" description="Transcription antitermination protein NusB">
    <location>
        <begin position="1"/>
        <end position="160"/>
    </location>
</feature>
<gene>
    <name evidence="1" type="primary">nusB</name>
    <name type="ordered locus">RL1633</name>
</gene>
<name>NUSB_RHIJ3</name>
<comment type="function">
    <text evidence="1">Involved in transcription antitermination. Required for transcription of ribosomal RNA (rRNA) genes. Binds specifically to the boxA antiterminator sequence of the ribosomal RNA (rrn) operons.</text>
</comment>
<comment type="similarity">
    <text evidence="1">Belongs to the NusB family.</text>
</comment>
<accession>Q1MIT2</accession>
<protein>
    <recommendedName>
        <fullName evidence="1">Transcription antitermination protein NusB</fullName>
    </recommendedName>
    <alternativeName>
        <fullName evidence="1">Antitermination factor NusB</fullName>
    </alternativeName>
</protein>
<reference key="1">
    <citation type="journal article" date="2006" name="Genome Biol.">
        <title>The genome of Rhizobium leguminosarum has recognizable core and accessory components.</title>
        <authorList>
            <person name="Young J.P.W."/>
            <person name="Crossman L.C."/>
            <person name="Johnston A.W.B."/>
            <person name="Thomson N.R."/>
            <person name="Ghazoui Z.F."/>
            <person name="Hull K.H."/>
            <person name="Wexler M."/>
            <person name="Curson A.R.J."/>
            <person name="Todd J.D."/>
            <person name="Poole P.S."/>
            <person name="Mauchline T.H."/>
            <person name="East A.K."/>
            <person name="Quail M.A."/>
            <person name="Churcher C."/>
            <person name="Arrowsmith C."/>
            <person name="Cherevach I."/>
            <person name="Chillingworth T."/>
            <person name="Clarke K."/>
            <person name="Cronin A."/>
            <person name="Davis P."/>
            <person name="Fraser A."/>
            <person name="Hance Z."/>
            <person name="Hauser H."/>
            <person name="Jagels K."/>
            <person name="Moule S."/>
            <person name="Mungall K."/>
            <person name="Norbertczak H."/>
            <person name="Rabbinowitsch E."/>
            <person name="Sanders M."/>
            <person name="Simmonds M."/>
            <person name="Whitehead S."/>
            <person name="Parkhill J."/>
        </authorList>
    </citation>
    <scope>NUCLEOTIDE SEQUENCE [LARGE SCALE GENOMIC DNA]</scope>
    <source>
        <strain>DSM 114642 / LMG 32736 / 3841</strain>
    </source>
</reference>
<evidence type="ECO:0000255" key="1">
    <source>
        <dbReference type="HAMAP-Rule" id="MF_00073"/>
    </source>
</evidence>
<keyword id="KW-0694">RNA-binding</keyword>
<keyword id="KW-0804">Transcription</keyword>
<keyword id="KW-0889">Transcription antitermination</keyword>
<keyword id="KW-0805">Transcription regulation</keyword>
<organism>
    <name type="scientific">Rhizobium johnstonii (strain DSM 114642 / LMG 32736 / 3841)</name>
    <name type="common">Rhizobium leguminosarum bv. viciae</name>
    <dbReference type="NCBI Taxonomy" id="216596"/>
    <lineage>
        <taxon>Bacteria</taxon>
        <taxon>Pseudomonadati</taxon>
        <taxon>Pseudomonadota</taxon>
        <taxon>Alphaproteobacteria</taxon>
        <taxon>Hyphomicrobiales</taxon>
        <taxon>Rhizobiaceae</taxon>
        <taxon>Rhizobium/Agrobacterium group</taxon>
        <taxon>Rhizobium</taxon>
        <taxon>Rhizobium johnstonii</taxon>
    </lineage>
</organism>
<dbReference type="EMBL" id="AM236080">
    <property type="protein sequence ID" value="CAK07128.1"/>
    <property type="molecule type" value="Genomic_DNA"/>
</dbReference>
<dbReference type="RefSeq" id="WP_011651311.1">
    <property type="nucleotide sequence ID" value="NC_008380.1"/>
</dbReference>
<dbReference type="SMR" id="Q1MIT2"/>
<dbReference type="EnsemblBacteria" id="CAK07128">
    <property type="protein sequence ID" value="CAK07128"/>
    <property type="gene ID" value="RL1633"/>
</dbReference>
<dbReference type="KEGG" id="rle:RL1633"/>
<dbReference type="eggNOG" id="COG0781">
    <property type="taxonomic scope" value="Bacteria"/>
</dbReference>
<dbReference type="HOGENOM" id="CLU_087843_4_0_5"/>
<dbReference type="Proteomes" id="UP000006575">
    <property type="component" value="Chromosome"/>
</dbReference>
<dbReference type="GO" id="GO:0005829">
    <property type="term" value="C:cytosol"/>
    <property type="evidence" value="ECO:0007669"/>
    <property type="project" value="TreeGrafter"/>
</dbReference>
<dbReference type="GO" id="GO:0003723">
    <property type="term" value="F:RNA binding"/>
    <property type="evidence" value="ECO:0007669"/>
    <property type="project" value="UniProtKB-UniRule"/>
</dbReference>
<dbReference type="GO" id="GO:0006353">
    <property type="term" value="P:DNA-templated transcription termination"/>
    <property type="evidence" value="ECO:0007669"/>
    <property type="project" value="UniProtKB-UniRule"/>
</dbReference>
<dbReference type="GO" id="GO:0031564">
    <property type="term" value="P:transcription antitermination"/>
    <property type="evidence" value="ECO:0007669"/>
    <property type="project" value="UniProtKB-KW"/>
</dbReference>
<dbReference type="Gene3D" id="1.10.940.10">
    <property type="entry name" value="NusB-like"/>
    <property type="match status" value="1"/>
</dbReference>
<dbReference type="HAMAP" id="MF_00073">
    <property type="entry name" value="NusB"/>
    <property type="match status" value="1"/>
</dbReference>
<dbReference type="InterPro" id="IPR035926">
    <property type="entry name" value="NusB-like_sf"/>
</dbReference>
<dbReference type="InterPro" id="IPR011605">
    <property type="entry name" value="NusB_fam"/>
</dbReference>
<dbReference type="InterPro" id="IPR006027">
    <property type="entry name" value="NusB_RsmB_TIM44"/>
</dbReference>
<dbReference type="NCBIfam" id="TIGR01951">
    <property type="entry name" value="nusB"/>
    <property type="match status" value="1"/>
</dbReference>
<dbReference type="PANTHER" id="PTHR11078:SF3">
    <property type="entry name" value="ANTITERMINATION NUSB DOMAIN-CONTAINING PROTEIN"/>
    <property type="match status" value="1"/>
</dbReference>
<dbReference type="PANTHER" id="PTHR11078">
    <property type="entry name" value="N UTILIZATION SUBSTANCE PROTEIN B-RELATED"/>
    <property type="match status" value="1"/>
</dbReference>
<dbReference type="Pfam" id="PF01029">
    <property type="entry name" value="NusB"/>
    <property type="match status" value="1"/>
</dbReference>
<dbReference type="SUPFAM" id="SSF48013">
    <property type="entry name" value="NusB-like"/>
    <property type="match status" value="1"/>
</dbReference>
<sequence>MNDDKTERPVKTANQRGAARLAAVQALYQMDVGGTGVLEIVAEYEAHRLGQEIDGETYLKADAAWFRSIVSGVVRDQVRLDPLIAAALQDDWALSRLDSTVRAILRAGVFEITDRKDVPVAVIVTEYVEIAQAFFDDDEPKLVNAVLDRIAKQVRGEPKK</sequence>